<name>RHAT_SALTY</name>
<evidence type="ECO:0000255" key="1">
    <source>
        <dbReference type="HAMAP-Rule" id="MF_01532"/>
    </source>
</evidence>
<evidence type="ECO:0000303" key="2">
    <source>
    </source>
</evidence>
<evidence type="ECO:0000305" key="3"/>
<evidence type="ECO:0000305" key="4">
    <source>
    </source>
</evidence>
<dbReference type="EMBL" id="M85157">
    <property type="protein sequence ID" value="AAA27211.1"/>
    <property type="molecule type" value="Genomic_DNA"/>
</dbReference>
<dbReference type="EMBL" id="AE006468">
    <property type="protein sequence ID" value="AAL22890.1"/>
    <property type="molecule type" value="Genomic_DNA"/>
</dbReference>
<dbReference type="PIR" id="A42436">
    <property type="entry name" value="A42436"/>
</dbReference>
<dbReference type="RefSeq" id="NP_462931.1">
    <property type="nucleotide sequence ID" value="NC_003197.2"/>
</dbReference>
<dbReference type="RefSeq" id="WP_000063541.1">
    <property type="nucleotide sequence ID" value="NC_003197.2"/>
</dbReference>
<dbReference type="STRING" id="99287.STM4050"/>
<dbReference type="PaxDb" id="99287-STM4050"/>
<dbReference type="GeneID" id="1255577"/>
<dbReference type="KEGG" id="stm:STM4050"/>
<dbReference type="PATRIC" id="fig|99287.12.peg.4267"/>
<dbReference type="HOGENOM" id="CLU_066437_0_0_6"/>
<dbReference type="OMA" id="QFFFYGM"/>
<dbReference type="PhylomeDB" id="P27135"/>
<dbReference type="BioCyc" id="SENT99287:STM4050-MONOMER"/>
<dbReference type="Proteomes" id="UP000001014">
    <property type="component" value="Chromosome"/>
</dbReference>
<dbReference type="GO" id="GO:0005886">
    <property type="term" value="C:plasma membrane"/>
    <property type="evidence" value="ECO:0007669"/>
    <property type="project" value="UniProtKB-SubCell"/>
</dbReference>
<dbReference type="GO" id="GO:0015153">
    <property type="term" value="F:rhamnose transmembrane transporter activity"/>
    <property type="evidence" value="ECO:0007669"/>
    <property type="project" value="UniProtKB-UniRule"/>
</dbReference>
<dbReference type="GO" id="GO:0015293">
    <property type="term" value="F:symporter activity"/>
    <property type="evidence" value="ECO:0007669"/>
    <property type="project" value="UniProtKB-KW"/>
</dbReference>
<dbReference type="HAMAP" id="MF_01532">
    <property type="entry name" value="RhaT"/>
    <property type="match status" value="1"/>
</dbReference>
<dbReference type="InterPro" id="IPR004673">
    <property type="entry name" value="L-rhamnose-proton_sym_RhaT"/>
</dbReference>
<dbReference type="NCBIfam" id="NF010021">
    <property type="entry name" value="PRK13499.1-1"/>
    <property type="match status" value="1"/>
</dbReference>
<dbReference type="NCBIfam" id="NF010023">
    <property type="entry name" value="PRK13499.1-3"/>
    <property type="match status" value="1"/>
</dbReference>
<dbReference type="NCBIfam" id="TIGR00776">
    <property type="entry name" value="RhaT"/>
    <property type="match status" value="1"/>
</dbReference>
<dbReference type="Pfam" id="PF06379">
    <property type="entry name" value="RhaT"/>
    <property type="match status" value="1"/>
</dbReference>
<accession>P27135</accession>
<proteinExistence type="inferred from homology"/>
<sequence length="344" mass="37390">MSNAITMGIFWHLIGAASAACFYAPFKQVKQWSWETMWSVGGIVSWLILPWTISALLLPDFWAYYGQFNLSTLLPVFLFGAMWGIGNINYGLTMRYLGMSMGIGIAIGITLIVGTLMTPIINGNFDVLIHTEGGRMTLLGVFVALIGVGIVTRAGQLKERKMGIKAEEFNLKKGLLLAVMCGIFSAGMSFAMNAAKPMHEAAAALGVDPLYVALPSYVVIMGGGALVNLGFCFIRLAKVQNLSIKADFSLARPLIISNILLSALGGLMWYLQFFFYAWGHARIPAQYDYMSWMLHMSFYVLCGGLVGLVLKEWKNAGRRPVAVLSLGCVVIIIAANIVGLGMAS</sequence>
<organism>
    <name type="scientific">Salmonella typhimurium (strain LT2 / SGSC1412 / ATCC 700720)</name>
    <dbReference type="NCBI Taxonomy" id="99287"/>
    <lineage>
        <taxon>Bacteria</taxon>
        <taxon>Pseudomonadati</taxon>
        <taxon>Pseudomonadota</taxon>
        <taxon>Gammaproteobacteria</taxon>
        <taxon>Enterobacterales</taxon>
        <taxon>Enterobacteriaceae</taxon>
        <taxon>Salmonella</taxon>
    </lineage>
</organism>
<gene>
    <name evidence="1" type="primary">rhaT</name>
    <name type="ordered locus">STM4050</name>
</gene>
<protein>
    <recommendedName>
        <fullName evidence="1">L-rhamnose-proton symporter</fullName>
    </recommendedName>
    <alternativeName>
        <fullName evidence="1 2">L-rhamnose-H(+) transport protein</fullName>
    </alternativeName>
</protein>
<comment type="function">
    <text evidence="4">Uptake of L-rhamnose across the cytoplasmic membrane with the concomitant transport of protons into the cell (symport system).</text>
</comment>
<comment type="catalytic activity">
    <reaction evidence="1">
        <text>L-rhamnopyranose(in) + H(+)(in) = L-rhamnopyranose(out) + H(+)(out)</text>
        <dbReference type="Rhea" id="RHEA:29947"/>
        <dbReference type="ChEBI" id="CHEBI:15378"/>
        <dbReference type="ChEBI" id="CHEBI:62346"/>
    </reaction>
    <physiologicalReaction direction="right-to-left" evidence="1">
        <dbReference type="Rhea" id="RHEA:29949"/>
    </physiologicalReaction>
</comment>
<comment type="subcellular location">
    <subcellularLocation>
        <location evidence="1">Cell inner membrane</location>
        <topology evidence="1">Multi-pass membrane protein</topology>
    </subcellularLocation>
</comment>
<comment type="similarity">
    <text evidence="1 3">Belongs to the L-rhamnose transporter (TC 2.A.7.6) family.</text>
</comment>
<keyword id="KW-0997">Cell inner membrane</keyword>
<keyword id="KW-1003">Cell membrane</keyword>
<keyword id="KW-0472">Membrane</keyword>
<keyword id="KW-1185">Reference proteome</keyword>
<keyword id="KW-0762">Sugar transport</keyword>
<keyword id="KW-0769">Symport</keyword>
<keyword id="KW-0812">Transmembrane</keyword>
<keyword id="KW-1133">Transmembrane helix</keyword>
<keyword id="KW-0813">Transport</keyword>
<reference key="1">
    <citation type="journal article" date="1992" name="J. Biol. Chem.">
        <title>Mapping, cloning, expression, and sequencing of the rhaT gene, which encodes a novel L-rhamnose-H+ transport protein in Salmonella typhimurium and Escherichia coli.</title>
        <authorList>
            <person name="Tate C.G."/>
            <person name="Muiry J.A.R."/>
            <person name="Henderson P.J.F."/>
        </authorList>
    </citation>
    <scope>NUCLEOTIDE SEQUENCE [GENOMIC DNA]</scope>
    <scope>FUNCTION</scope>
    <source>
        <strain>C5</strain>
    </source>
</reference>
<reference key="2">
    <citation type="journal article" date="2001" name="Nature">
        <title>Complete genome sequence of Salmonella enterica serovar Typhimurium LT2.</title>
        <authorList>
            <person name="McClelland M."/>
            <person name="Sanderson K.E."/>
            <person name="Spieth J."/>
            <person name="Clifton S.W."/>
            <person name="Latreille P."/>
            <person name="Courtney L."/>
            <person name="Porwollik S."/>
            <person name="Ali J."/>
            <person name="Dante M."/>
            <person name="Du F."/>
            <person name="Hou S."/>
            <person name="Layman D."/>
            <person name="Leonard S."/>
            <person name="Nguyen C."/>
            <person name="Scott K."/>
            <person name="Holmes A."/>
            <person name="Grewal N."/>
            <person name="Mulvaney E."/>
            <person name="Ryan E."/>
            <person name="Sun H."/>
            <person name="Florea L."/>
            <person name="Miller W."/>
            <person name="Stoneking T."/>
            <person name="Nhan M."/>
            <person name="Waterston R."/>
            <person name="Wilson R.K."/>
        </authorList>
    </citation>
    <scope>NUCLEOTIDE SEQUENCE [LARGE SCALE GENOMIC DNA]</scope>
    <source>
        <strain>LT2 / SGSC1412 / ATCC 700720</strain>
    </source>
</reference>
<feature type="chain" id="PRO_0000208280" description="L-rhamnose-proton symporter">
    <location>
        <begin position="1"/>
        <end position="344"/>
    </location>
</feature>
<feature type="transmembrane region" description="Helical" evidence="1">
    <location>
        <begin position="4"/>
        <end position="24"/>
    </location>
</feature>
<feature type="transmembrane region" description="Helical" evidence="1">
    <location>
        <begin position="38"/>
        <end position="58"/>
    </location>
</feature>
<feature type="transmembrane region" description="Helical" evidence="1">
    <location>
        <begin position="68"/>
        <end position="88"/>
    </location>
</feature>
<feature type="transmembrane region" description="Helical" evidence="1">
    <location>
        <begin position="101"/>
        <end position="121"/>
    </location>
</feature>
<feature type="transmembrane region" description="Helical" evidence="1">
    <location>
        <begin position="137"/>
        <end position="157"/>
    </location>
</feature>
<feature type="transmembrane region" description="Helical" evidence="1">
    <location>
        <begin position="175"/>
        <end position="195"/>
    </location>
</feature>
<feature type="transmembrane region" description="Helical" evidence="1">
    <location>
        <begin position="214"/>
        <end position="234"/>
    </location>
</feature>
<feature type="transmembrane region" description="Helical" evidence="1">
    <location>
        <begin position="259"/>
        <end position="279"/>
    </location>
</feature>
<feature type="transmembrane region" description="Helical" evidence="1">
    <location>
        <begin position="290"/>
        <end position="310"/>
    </location>
</feature>
<feature type="transmembrane region" description="Helical" evidence="1">
    <location>
        <begin position="321"/>
        <end position="341"/>
    </location>
</feature>